<evidence type="ECO:0000269" key="1">
    <source>
    </source>
</evidence>
<evidence type="ECO:0000303" key="2">
    <source>
    </source>
</evidence>
<evidence type="ECO:0000305" key="3"/>
<protein>
    <recommendedName>
        <fullName evidence="2">4-coumarate:CoA ligase 1</fullName>
        <shortName evidence="2">Ph-4CL1</shortName>
        <shortName evidence="2">Ph4CL1</shortName>
        <ecNumber evidence="1">6.2.1.12</ecNumber>
    </recommendedName>
    <alternativeName>
        <fullName evidence="3">(E)-caffeate:CoA ligase 4CL1</fullName>
        <ecNumber evidence="1">6.2.1.-</ecNumber>
    </alternativeName>
    <alternativeName>
        <fullName evidence="3">Benzoate:CoA ligase 4CL1</fullName>
        <ecNumber evidence="1">6.2.1.25</ecNumber>
    </alternativeName>
    <alternativeName>
        <fullName evidence="3">Trans-cinnamate:CoA ligase 4CL1</fullName>
        <ecNumber evidence="1">6.2.1.-</ecNumber>
    </alternativeName>
    <alternativeName>
        <fullName evidence="3">Trans-ferulate:CoA ligase 4CL1</fullName>
        <ecNumber evidence="1">6.2.1.-</ecNumber>
    </alternativeName>
</protein>
<proteinExistence type="evidence at protein level"/>
<reference key="1">
    <citation type="journal article" date="2012" name="Plant Cell">
        <title>Contribution of CoA ligases to benzenoid biosynthesis in petunia flowers.</title>
        <authorList>
            <person name="Klempien A."/>
            <person name="Kaminaga Y."/>
            <person name="Qualley A."/>
            <person name="Nagegowda D.A."/>
            <person name="Widhalm J.R."/>
            <person name="Orlova I."/>
            <person name="Shasany A.K."/>
            <person name="Taguchi G."/>
            <person name="Kish C.M."/>
            <person name="Cooper B.R."/>
            <person name="D'Auria J.C."/>
            <person name="Rhodes D."/>
            <person name="Pichersky E."/>
            <person name="Dudareva N."/>
        </authorList>
    </citation>
    <scope>NUCLEOTIDE SEQUENCE [MRNA]</scope>
    <scope>FUNCTION</scope>
    <scope>DISRUPTION PHENOTYPE</scope>
    <scope>CATALYTIC ACTIVITY</scope>
    <scope>PATHWAY</scope>
    <scope>TISSUE SPECIFICITY</scope>
    <scope>SUBCELLULAR LOCATION</scope>
    <scope>INDUCTION</scope>
    <scope>SUBUNIT</scope>
    <scope>BIOPHYSICOCHEMICAL PROPERTIES</scope>
    <source>
        <strain>cv. Mitchell</strain>
    </source>
</reference>
<gene>
    <name evidence="2" type="primary">4CL1</name>
</gene>
<dbReference type="EC" id="6.2.1.12" evidence="1"/>
<dbReference type="EC" id="6.2.1.-" evidence="1"/>
<dbReference type="EC" id="6.2.1.25" evidence="1"/>
<dbReference type="EMBL" id="JN120849">
    <property type="protein sequence ID" value="AEO52694.1"/>
    <property type="molecule type" value="mRNA"/>
</dbReference>
<dbReference type="SMR" id="I3PB37"/>
<dbReference type="UniPathway" id="UPA00372">
    <property type="reaction ID" value="UER00547"/>
</dbReference>
<dbReference type="UniPathway" id="UPA00713"/>
<dbReference type="GO" id="GO:0005829">
    <property type="term" value="C:cytosol"/>
    <property type="evidence" value="ECO:0000314"/>
    <property type="project" value="UniProtKB"/>
</dbReference>
<dbReference type="GO" id="GO:0106286">
    <property type="term" value="F:(E)-caffeate-CoA ligase activity"/>
    <property type="evidence" value="ECO:0000314"/>
    <property type="project" value="UniProtKB"/>
</dbReference>
<dbReference type="GO" id="GO:0016207">
    <property type="term" value="F:4-coumarate-CoA ligase activity"/>
    <property type="evidence" value="ECO:0000314"/>
    <property type="project" value="UniProtKB"/>
</dbReference>
<dbReference type="GO" id="GO:0005524">
    <property type="term" value="F:ATP binding"/>
    <property type="evidence" value="ECO:0007669"/>
    <property type="project" value="UniProtKB-KW"/>
</dbReference>
<dbReference type="GO" id="GO:0018858">
    <property type="term" value="F:benzoate-CoA ligase activity"/>
    <property type="evidence" value="ECO:0000314"/>
    <property type="project" value="UniProtKB"/>
</dbReference>
<dbReference type="GO" id="GO:0016405">
    <property type="term" value="F:CoA-ligase activity"/>
    <property type="evidence" value="ECO:0000314"/>
    <property type="project" value="UniProtKB"/>
</dbReference>
<dbReference type="GO" id="GO:0106290">
    <property type="term" value="F:trans-cinnamate-CoA ligase activity"/>
    <property type="evidence" value="ECO:0000314"/>
    <property type="project" value="UniProtKB"/>
</dbReference>
<dbReference type="GO" id="GO:0050563">
    <property type="term" value="F:trans-feruloyl-CoA synthase activity"/>
    <property type="evidence" value="ECO:0000314"/>
    <property type="project" value="UniProtKB"/>
</dbReference>
<dbReference type="GO" id="GO:0009800">
    <property type="term" value="P:cinnamic acid biosynthetic process"/>
    <property type="evidence" value="ECO:0007669"/>
    <property type="project" value="UniProtKB-UniPathway"/>
</dbReference>
<dbReference type="GO" id="GO:0009803">
    <property type="term" value="P:cinnamic acid metabolic process"/>
    <property type="evidence" value="ECO:0000314"/>
    <property type="project" value="UniProtKB"/>
</dbReference>
<dbReference type="GO" id="GO:0007623">
    <property type="term" value="P:circadian rhythm"/>
    <property type="evidence" value="ECO:0000270"/>
    <property type="project" value="UniProtKB"/>
</dbReference>
<dbReference type="GO" id="GO:0033494">
    <property type="term" value="P:ferulate metabolic process"/>
    <property type="evidence" value="ECO:0000314"/>
    <property type="project" value="UniProtKB"/>
</dbReference>
<dbReference type="GO" id="GO:0009698">
    <property type="term" value="P:phenylpropanoid metabolic process"/>
    <property type="evidence" value="ECO:0000314"/>
    <property type="project" value="UniProtKB"/>
</dbReference>
<dbReference type="GO" id="GO:0052315">
    <property type="term" value="P:phytoalexin biosynthetic process"/>
    <property type="evidence" value="ECO:0000314"/>
    <property type="project" value="UniProtKB"/>
</dbReference>
<dbReference type="CDD" id="cd05904">
    <property type="entry name" value="4CL"/>
    <property type="match status" value="1"/>
</dbReference>
<dbReference type="FunFam" id="3.30.300.30:FF:000007">
    <property type="entry name" value="4-coumarate--CoA ligase 2"/>
    <property type="match status" value="1"/>
</dbReference>
<dbReference type="FunFam" id="3.40.50.12780:FF:000003">
    <property type="entry name" value="Long-chain-fatty-acid--CoA ligase FadD"/>
    <property type="match status" value="1"/>
</dbReference>
<dbReference type="Gene3D" id="3.30.300.30">
    <property type="match status" value="1"/>
</dbReference>
<dbReference type="Gene3D" id="3.40.50.12780">
    <property type="entry name" value="N-terminal domain of ligase-like"/>
    <property type="match status" value="1"/>
</dbReference>
<dbReference type="InterPro" id="IPR025110">
    <property type="entry name" value="AMP-bd_C"/>
</dbReference>
<dbReference type="InterPro" id="IPR045851">
    <property type="entry name" value="AMP-bd_C_sf"/>
</dbReference>
<dbReference type="InterPro" id="IPR020845">
    <property type="entry name" value="AMP-binding_CS"/>
</dbReference>
<dbReference type="InterPro" id="IPR000873">
    <property type="entry name" value="AMP-dep_synth/lig_dom"/>
</dbReference>
<dbReference type="InterPro" id="IPR042099">
    <property type="entry name" value="ANL_N_sf"/>
</dbReference>
<dbReference type="PANTHER" id="PTHR24096:SF402">
    <property type="entry name" value="4-COUMARATE--COA LIGASE 1"/>
    <property type="match status" value="1"/>
</dbReference>
<dbReference type="PANTHER" id="PTHR24096">
    <property type="entry name" value="LONG-CHAIN-FATTY-ACID--COA LIGASE"/>
    <property type="match status" value="1"/>
</dbReference>
<dbReference type="Pfam" id="PF00501">
    <property type="entry name" value="AMP-binding"/>
    <property type="match status" value="1"/>
</dbReference>
<dbReference type="Pfam" id="PF13193">
    <property type="entry name" value="AMP-binding_C"/>
    <property type="match status" value="1"/>
</dbReference>
<dbReference type="SUPFAM" id="SSF56801">
    <property type="entry name" value="Acetyl-CoA synthetase-like"/>
    <property type="match status" value="1"/>
</dbReference>
<dbReference type="PROSITE" id="PS00455">
    <property type="entry name" value="AMP_BINDING"/>
    <property type="match status" value="1"/>
</dbReference>
<organism>
    <name type="scientific">Petunia hybrida</name>
    <name type="common">Petunia</name>
    <dbReference type="NCBI Taxonomy" id="4102"/>
    <lineage>
        <taxon>Eukaryota</taxon>
        <taxon>Viridiplantae</taxon>
        <taxon>Streptophyta</taxon>
        <taxon>Embryophyta</taxon>
        <taxon>Tracheophyta</taxon>
        <taxon>Spermatophyta</taxon>
        <taxon>Magnoliopsida</taxon>
        <taxon>eudicotyledons</taxon>
        <taxon>Gunneridae</taxon>
        <taxon>Pentapetalae</taxon>
        <taxon>asterids</taxon>
        <taxon>lamiids</taxon>
        <taxon>Solanales</taxon>
        <taxon>Solanaceae</taxon>
        <taxon>Petunioideae</taxon>
        <taxon>Petunia</taxon>
    </lineage>
</organism>
<feature type="chain" id="PRO_0000451515" description="4-coumarate:CoA ligase 1">
    <location>
        <begin position="1"/>
        <end position="544"/>
    </location>
</feature>
<accession>I3PB37</accession>
<comment type="function">
    <text evidence="1">Catalyzes the formation of CoA esters of trans-cinnamic acid, 4-coumaric acid, ferulic acid, benzoic acid and caffeic acid.</text>
</comment>
<comment type="catalytic activity">
    <reaction evidence="1">
        <text>(E)-4-coumarate + ATP + CoA = (E)-4-coumaroyl-CoA + AMP + diphosphate</text>
        <dbReference type="Rhea" id="RHEA:19641"/>
        <dbReference type="ChEBI" id="CHEBI:12876"/>
        <dbReference type="ChEBI" id="CHEBI:30616"/>
        <dbReference type="ChEBI" id="CHEBI:33019"/>
        <dbReference type="ChEBI" id="CHEBI:57287"/>
        <dbReference type="ChEBI" id="CHEBI:85008"/>
        <dbReference type="ChEBI" id="CHEBI:456215"/>
        <dbReference type="EC" id="6.2.1.12"/>
    </reaction>
    <physiologicalReaction direction="left-to-right" evidence="1">
        <dbReference type="Rhea" id="RHEA:19642"/>
    </physiologicalReaction>
</comment>
<comment type="catalytic activity">
    <reaction evidence="1">
        <text>(E)-caffeate + ATP + CoA = (E)-caffeoyl-CoA + AMP + diphosphate</text>
        <dbReference type="Rhea" id="RHEA:36299"/>
        <dbReference type="ChEBI" id="CHEBI:30616"/>
        <dbReference type="ChEBI" id="CHEBI:33019"/>
        <dbReference type="ChEBI" id="CHEBI:57287"/>
        <dbReference type="ChEBI" id="CHEBI:57770"/>
        <dbReference type="ChEBI" id="CHEBI:87136"/>
        <dbReference type="ChEBI" id="CHEBI:456215"/>
    </reaction>
    <physiologicalReaction direction="left-to-right" evidence="1">
        <dbReference type="Rhea" id="RHEA:36300"/>
    </physiologicalReaction>
</comment>
<comment type="catalytic activity">
    <reaction evidence="1">
        <text>benzoate + ATP + CoA = benzoyl-CoA + AMP + diphosphate</text>
        <dbReference type="Rhea" id="RHEA:10132"/>
        <dbReference type="ChEBI" id="CHEBI:16150"/>
        <dbReference type="ChEBI" id="CHEBI:30616"/>
        <dbReference type="ChEBI" id="CHEBI:33019"/>
        <dbReference type="ChEBI" id="CHEBI:57287"/>
        <dbReference type="ChEBI" id="CHEBI:57369"/>
        <dbReference type="ChEBI" id="CHEBI:456215"/>
        <dbReference type="EC" id="6.2.1.25"/>
    </reaction>
    <physiologicalReaction direction="left-to-right" evidence="1">
        <dbReference type="Rhea" id="RHEA:10133"/>
    </physiologicalReaction>
</comment>
<comment type="catalytic activity">
    <reaction evidence="1">
        <text>(E)-cinnamate + ATP + CoA = (E)-cinnamoyl-CoA + AMP + diphosphate</text>
        <dbReference type="Rhea" id="RHEA:64788"/>
        <dbReference type="ChEBI" id="CHEBI:15669"/>
        <dbReference type="ChEBI" id="CHEBI:30616"/>
        <dbReference type="ChEBI" id="CHEBI:33019"/>
        <dbReference type="ChEBI" id="CHEBI:57252"/>
        <dbReference type="ChEBI" id="CHEBI:57287"/>
        <dbReference type="ChEBI" id="CHEBI:456215"/>
    </reaction>
    <physiologicalReaction direction="left-to-right" evidence="1">
        <dbReference type="Rhea" id="RHEA:64789"/>
    </physiologicalReaction>
</comment>
<comment type="catalytic activity">
    <reaction evidence="1">
        <text>(E)-ferulate + ATP + CoA = (E)-feruloyl-CoA + AMP + diphosphate</text>
        <dbReference type="Rhea" id="RHEA:36251"/>
        <dbReference type="ChEBI" id="CHEBI:29749"/>
        <dbReference type="ChEBI" id="CHEBI:30616"/>
        <dbReference type="ChEBI" id="CHEBI:33019"/>
        <dbReference type="ChEBI" id="CHEBI:57287"/>
        <dbReference type="ChEBI" id="CHEBI:87305"/>
        <dbReference type="ChEBI" id="CHEBI:456215"/>
    </reaction>
    <physiologicalReaction direction="left-to-right" evidence="1">
        <dbReference type="Rhea" id="RHEA:36252"/>
    </physiologicalReaction>
</comment>
<comment type="biophysicochemical properties">
    <kinetics>
        <KM evidence="1">149.4 uM for trans-cinnamic acid</KM>
        <KM evidence="1">16.4 uM for 4-coumaric acid</KM>
        <KM evidence="1">47.8 uM for caffeic acid</KM>
        <KM evidence="1">15.2 uM for ferulic acid</KM>
        <KM evidence="1">9008 uM for benzoic acid</KM>
        <KM evidence="1">9.9 uM for CoA</KM>
        <Vmax evidence="1">14680.0 pmol/sec/mg enzyme with trans-cinnamic acid as substrate</Vmax>
        <Vmax evidence="1">25797.0 pmol/sec/mg enzyme with 4-coumaric acid as substrate</Vmax>
        <Vmax evidence="1">63200.0 pmol/sec/mg enzyme with caffeic acid as substrate</Vmax>
        <Vmax evidence="1">41377.0 pmol/sec/mg enzyme with ferulic acid as substrate</Vmax>
        <Vmax evidence="1">95.9 pmol/sec/mg enzyme with benzoic acid as substrate</Vmax>
        <Vmax evidence="1">8451.0 pmol/sec/mg enzyme with CoA acid as substrate</Vmax>
        <text evidence="1">kcat is 0.847 sec(-1) with trans-cinnamic acid as substrate (PubMed:22649270). kcat is 1.488 sec(-1) with 4-coumaric acid as substrate (PubMed:22649270). kcat is 3.645 sec(-1) with caffeic acid as substrate (PubMed:22649270). kcat is 2.39 sec(-1) with ferulic acid as substrate (PubMed:22649270). kcat is 0.0007 sec(-1) with benzoic acid as substrate (PubMed:22649270). kcat is 0.487 sec(-1) with CoA as substrate (PubMed:22649270).</text>
    </kinetics>
    <phDependence>
        <text evidence="1">Optimum pH is 8.5 with cinnamic acid as a substrate.</text>
    </phDependence>
</comment>
<comment type="pathway">
    <text evidence="1">Phenylpropanoid metabolism; trans-cinnamate biosynthesis.</text>
</comment>
<comment type="pathway">
    <text evidence="1">Phytoalexin biosynthesis; 3,4',5-trihydroxystilbene biosynthesis; 3,4',5-trihydroxystilbene from trans-4-coumarate: step 1/2.</text>
</comment>
<comment type="subunit">
    <text evidence="1">Monomer.</text>
</comment>
<comment type="subcellular location">
    <subcellularLocation>
        <location evidence="1">Cytoplasm</location>
        <location evidence="1">Cytosol</location>
    </subcellularLocation>
</comment>
<comment type="tissue specificity">
    <text evidence="1">Mostly expressed in flower organs, with highest levels in corollas, and, to a lesser extent, in tubes, sepals, pistils, stamen and ovaries (PubMed:22649270). Also present at low levels in leaves (PubMed:22649270).</text>
</comment>
<comment type="induction">
    <text evidence="1">Circadian-regulation with peak levels occurring late afternoon (e.g. 3 to 7 pm).</text>
</comment>
<comment type="disruption phenotype">
    <text evidence="1">Normal benzenoid scent profile in flowers.</text>
</comment>
<comment type="similarity">
    <text evidence="3">Belongs to the ATP-dependent AMP-binding enzyme family.</text>
</comment>
<sequence length="544" mass="59610">MPMETETNQGDLIFRSKLPDIYIPKHLPLHSYCFENISEFSSRPCLINGANNHIYTYADVELTSRKVAAGLNKLGIQQKDTIMILLPNSPEFVFAFMGASYLGAISTMANPLFTPAEVVKQAKASNAKLIITQACFVNKVKDYAFDNNLNVICIDSAPEGCIHFSELTQADEHDIPDVKIQSDDVVALPYSSGTTGLPKGVMLTHKGLVTSVAQQVDGENANLYMHSEDVLMCVLPLFHIYSLNSVLLCGLRVGAAILIMQKFDIVQFCELIEKYKVTIGPFVPPIVLAIAKSPVVDNYDLSSVRTVMSGAAPLGKELEDAVRIKFPNAKLGQGYGMTEAGPVLAMCLAFAKEPFDIKSGACGTVVRNAEMKIVDPDTGCSLPRNQPGEICIRGDQIMKGYLNDPAATTRTIDKEGWLHTGDIGYIDNDDELFIVDRLKELIKYKGFQVAPAELEALLLNHPNISDAAVVPMKDEQAGEVPVAFVVRSNGSDITEDEVKDFVSKQVIFYKRIKRVFFVETVPKSPSGKILRKDLRARLAAGVPN</sequence>
<keyword id="KW-0067">ATP-binding</keyword>
<keyword id="KW-0963">Cytoplasm</keyword>
<keyword id="KW-0436">Ligase</keyword>
<keyword id="KW-0547">Nucleotide-binding</keyword>
<keyword id="KW-0587">Phenylpropanoid metabolism</keyword>
<name>4CL1_PETHY</name>